<name>PXPA_MYCUA</name>
<proteinExistence type="inferred from homology"/>
<reference key="1">
    <citation type="journal article" date="2007" name="Genome Res.">
        <title>Reductive evolution and niche adaptation inferred from the genome of Mycobacterium ulcerans, the causative agent of Buruli ulcer.</title>
        <authorList>
            <person name="Stinear T.P."/>
            <person name="Seemann T."/>
            <person name="Pidot S."/>
            <person name="Frigui W."/>
            <person name="Reysset G."/>
            <person name="Garnier T."/>
            <person name="Meurice G."/>
            <person name="Simon D."/>
            <person name="Bouchier C."/>
            <person name="Ma L."/>
            <person name="Tichit M."/>
            <person name="Porter J.L."/>
            <person name="Ryan J."/>
            <person name="Johnson P.D.R."/>
            <person name="Davies J.K."/>
            <person name="Jenkin G.A."/>
            <person name="Small P.L.C."/>
            <person name="Jones L.M."/>
            <person name="Tekaia F."/>
            <person name="Laval F."/>
            <person name="Daffe M."/>
            <person name="Parkhill J."/>
            <person name="Cole S.T."/>
        </authorList>
    </citation>
    <scope>NUCLEOTIDE SEQUENCE [LARGE SCALE GENOMIC DNA]</scope>
    <source>
        <strain>Agy99</strain>
    </source>
</reference>
<protein>
    <recommendedName>
        <fullName evidence="1">5-oxoprolinase subunit A</fullName>
        <shortName evidence="1">5-OPase subunit A</shortName>
        <ecNumber evidence="1">3.5.2.9</ecNumber>
    </recommendedName>
    <alternativeName>
        <fullName evidence="1">5-oxoprolinase (ATP-hydrolyzing) subunit A</fullName>
    </alternativeName>
</protein>
<sequence length="252" mass="26397">MPYIDLNADLGEGFGIWQLGDDDAMLGIVTSANVACGFHAGEPAGLLRVCRAAAERGVRIGAQVGYRDLAGFGRRFIDVDPEDLVAEVVYQIGALQAIAQSCGSTVSYVKPHGALYNTIVTHRDQAAAVAEAVRMVDATLPVLGMTGSVFFQQATDLGLRTVAEAFADRAYRSDGQLVSRREHGAVLADAAAIAQRAVSMVASGKVTAVDGTQVPITMESICVHGDSPGAMQIATAVRDRLTAAGNEIRAFC</sequence>
<accession>A0PV23</accession>
<feature type="chain" id="PRO_1000045210" description="5-oxoprolinase subunit A">
    <location>
        <begin position="1"/>
        <end position="252"/>
    </location>
</feature>
<evidence type="ECO:0000255" key="1">
    <source>
        <dbReference type="HAMAP-Rule" id="MF_00691"/>
    </source>
</evidence>
<comment type="function">
    <text evidence="1">Catalyzes the cleavage of 5-oxoproline to form L-glutamate coupled to the hydrolysis of ATP to ADP and inorganic phosphate.</text>
</comment>
<comment type="catalytic activity">
    <reaction evidence="1">
        <text>5-oxo-L-proline + ATP + 2 H2O = L-glutamate + ADP + phosphate + H(+)</text>
        <dbReference type="Rhea" id="RHEA:10348"/>
        <dbReference type="ChEBI" id="CHEBI:15377"/>
        <dbReference type="ChEBI" id="CHEBI:15378"/>
        <dbReference type="ChEBI" id="CHEBI:29985"/>
        <dbReference type="ChEBI" id="CHEBI:30616"/>
        <dbReference type="ChEBI" id="CHEBI:43474"/>
        <dbReference type="ChEBI" id="CHEBI:58402"/>
        <dbReference type="ChEBI" id="CHEBI:456216"/>
        <dbReference type="EC" id="3.5.2.9"/>
    </reaction>
</comment>
<comment type="subunit">
    <text evidence="1">Forms a complex composed of PxpA, PxpB and PxpC.</text>
</comment>
<comment type="similarity">
    <text evidence="1">Belongs to the LamB/PxpA family.</text>
</comment>
<dbReference type="EC" id="3.5.2.9" evidence="1"/>
<dbReference type="EMBL" id="CP000325">
    <property type="protein sequence ID" value="ABL06192.1"/>
    <property type="molecule type" value="Genomic_DNA"/>
</dbReference>
<dbReference type="RefSeq" id="WP_011741796.1">
    <property type="nucleotide sequence ID" value="NC_008611.1"/>
</dbReference>
<dbReference type="SMR" id="A0PV23"/>
<dbReference type="KEGG" id="mul:MUL_4152"/>
<dbReference type="eggNOG" id="COG1540">
    <property type="taxonomic scope" value="Bacteria"/>
</dbReference>
<dbReference type="HOGENOM" id="CLU_069535_0_0_11"/>
<dbReference type="Proteomes" id="UP000000765">
    <property type="component" value="Chromosome"/>
</dbReference>
<dbReference type="GO" id="GO:0017168">
    <property type="term" value="F:5-oxoprolinase (ATP-hydrolyzing) activity"/>
    <property type="evidence" value="ECO:0007669"/>
    <property type="project" value="UniProtKB-UniRule"/>
</dbReference>
<dbReference type="GO" id="GO:0005524">
    <property type="term" value="F:ATP binding"/>
    <property type="evidence" value="ECO:0007669"/>
    <property type="project" value="UniProtKB-UniRule"/>
</dbReference>
<dbReference type="GO" id="GO:0005975">
    <property type="term" value="P:carbohydrate metabolic process"/>
    <property type="evidence" value="ECO:0007669"/>
    <property type="project" value="InterPro"/>
</dbReference>
<dbReference type="CDD" id="cd10787">
    <property type="entry name" value="LamB_YcsF_like"/>
    <property type="match status" value="1"/>
</dbReference>
<dbReference type="Gene3D" id="3.20.20.370">
    <property type="entry name" value="Glycoside hydrolase/deacetylase"/>
    <property type="match status" value="1"/>
</dbReference>
<dbReference type="HAMAP" id="MF_00691">
    <property type="entry name" value="PxpA"/>
    <property type="match status" value="1"/>
</dbReference>
<dbReference type="InterPro" id="IPR011330">
    <property type="entry name" value="Glyco_hydro/deAcase_b/a-brl"/>
</dbReference>
<dbReference type="InterPro" id="IPR005501">
    <property type="entry name" value="LamB/YcsF/PxpA-like"/>
</dbReference>
<dbReference type="NCBIfam" id="NF003814">
    <property type="entry name" value="PRK05406.1-3"/>
    <property type="match status" value="1"/>
</dbReference>
<dbReference type="NCBIfam" id="NF003816">
    <property type="entry name" value="PRK05406.1-5"/>
    <property type="match status" value="1"/>
</dbReference>
<dbReference type="PANTHER" id="PTHR30292:SF0">
    <property type="entry name" value="5-OXOPROLINASE SUBUNIT A"/>
    <property type="match status" value="1"/>
</dbReference>
<dbReference type="PANTHER" id="PTHR30292">
    <property type="entry name" value="UNCHARACTERIZED PROTEIN YBGL-RELATED"/>
    <property type="match status" value="1"/>
</dbReference>
<dbReference type="Pfam" id="PF03746">
    <property type="entry name" value="LamB_YcsF"/>
    <property type="match status" value="1"/>
</dbReference>
<dbReference type="SUPFAM" id="SSF88713">
    <property type="entry name" value="Glycoside hydrolase/deacetylase"/>
    <property type="match status" value="1"/>
</dbReference>
<gene>
    <name evidence="1" type="primary">pxpA</name>
    <name type="ordered locus">MUL_4152</name>
</gene>
<keyword id="KW-0067">ATP-binding</keyword>
<keyword id="KW-0378">Hydrolase</keyword>
<keyword id="KW-0547">Nucleotide-binding</keyword>
<organism>
    <name type="scientific">Mycobacterium ulcerans (strain Agy99)</name>
    <dbReference type="NCBI Taxonomy" id="362242"/>
    <lineage>
        <taxon>Bacteria</taxon>
        <taxon>Bacillati</taxon>
        <taxon>Actinomycetota</taxon>
        <taxon>Actinomycetes</taxon>
        <taxon>Mycobacteriales</taxon>
        <taxon>Mycobacteriaceae</taxon>
        <taxon>Mycobacterium</taxon>
        <taxon>Mycobacterium ulcerans group</taxon>
    </lineage>
</organism>